<name>RS19_ECOLC</name>
<feature type="chain" id="PRO_1000081770" description="Small ribosomal subunit protein uS19">
    <location>
        <begin position="1"/>
        <end position="92"/>
    </location>
</feature>
<keyword id="KW-0687">Ribonucleoprotein</keyword>
<keyword id="KW-0689">Ribosomal protein</keyword>
<keyword id="KW-0694">RNA-binding</keyword>
<keyword id="KW-0699">rRNA-binding</keyword>
<proteinExistence type="inferred from homology"/>
<protein>
    <recommendedName>
        <fullName evidence="1">Small ribosomal subunit protein uS19</fullName>
    </recommendedName>
    <alternativeName>
        <fullName evidence="2">30S ribosomal protein S19</fullName>
    </alternativeName>
</protein>
<comment type="function">
    <text evidence="1">Protein S19 forms a complex with S13 that binds strongly to the 16S ribosomal RNA.</text>
</comment>
<comment type="similarity">
    <text evidence="1">Belongs to the universal ribosomal protein uS19 family.</text>
</comment>
<gene>
    <name evidence="1" type="primary">rpsS</name>
    <name type="ordered locus">EcolC_0397</name>
</gene>
<reference key="1">
    <citation type="submission" date="2008-02" db="EMBL/GenBank/DDBJ databases">
        <title>Complete sequence of Escherichia coli C str. ATCC 8739.</title>
        <authorList>
            <person name="Copeland A."/>
            <person name="Lucas S."/>
            <person name="Lapidus A."/>
            <person name="Glavina del Rio T."/>
            <person name="Dalin E."/>
            <person name="Tice H."/>
            <person name="Bruce D."/>
            <person name="Goodwin L."/>
            <person name="Pitluck S."/>
            <person name="Kiss H."/>
            <person name="Brettin T."/>
            <person name="Detter J.C."/>
            <person name="Han C."/>
            <person name="Kuske C.R."/>
            <person name="Schmutz J."/>
            <person name="Larimer F."/>
            <person name="Land M."/>
            <person name="Hauser L."/>
            <person name="Kyrpides N."/>
            <person name="Mikhailova N."/>
            <person name="Ingram L."/>
            <person name="Richardson P."/>
        </authorList>
    </citation>
    <scope>NUCLEOTIDE SEQUENCE [LARGE SCALE GENOMIC DNA]</scope>
    <source>
        <strain>ATCC 8739 / DSM 1576 / NBRC 3972 / NCIMB 8545 / WDCM 00012 / Crooks</strain>
    </source>
</reference>
<dbReference type="EMBL" id="CP000946">
    <property type="protein sequence ID" value="ACA76075.1"/>
    <property type="molecule type" value="Genomic_DNA"/>
</dbReference>
<dbReference type="RefSeq" id="WP_001138117.1">
    <property type="nucleotide sequence ID" value="NZ_MTFT01000014.1"/>
</dbReference>
<dbReference type="SMR" id="B1IPY3"/>
<dbReference type="GeneID" id="98390438"/>
<dbReference type="KEGG" id="ecl:EcolC_0397"/>
<dbReference type="HOGENOM" id="CLU_144911_0_1_6"/>
<dbReference type="GO" id="GO:0005737">
    <property type="term" value="C:cytoplasm"/>
    <property type="evidence" value="ECO:0007669"/>
    <property type="project" value="UniProtKB-ARBA"/>
</dbReference>
<dbReference type="GO" id="GO:0015935">
    <property type="term" value="C:small ribosomal subunit"/>
    <property type="evidence" value="ECO:0007669"/>
    <property type="project" value="InterPro"/>
</dbReference>
<dbReference type="GO" id="GO:0019843">
    <property type="term" value="F:rRNA binding"/>
    <property type="evidence" value="ECO:0007669"/>
    <property type="project" value="UniProtKB-UniRule"/>
</dbReference>
<dbReference type="GO" id="GO:0003735">
    <property type="term" value="F:structural constituent of ribosome"/>
    <property type="evidence" value="ECO:0007669"/>
    <property type="project" value="InterPro"/>
</dbReference>
<dbReference type="GO" id="GO:0000028">
    <property type="term" value="P:ribosomal small subunit assembly"/>
    <property type="evidence" value="ECO:0007669"/>
    <property type="project" value="TreeGrafter"/>
</dbReference>
<dbReference type="GO" id="GO:0006412">
    <property type="term" value="P:translation"/>
    <property type="evidence" value="ECO:0007669"/>
    <property type="project" value="UniProtKB-UniRule"/>
</dbReference>
<dbReference type="FunFam" id="3.30.860.10:FF:000001">
    <property type="entry name" value="30S ribosomal protein S19"/>
    <property type="match status" value="1"/>
</dbReference>
<dbReference type="Gene3D" id="3.30.860.10">
    <property type="entry name" value="30s Ribosomal Protein S19, Chain A"/>
    <property type="match status" value="1"/>
</dbReference>
<dbReference type="HAMAP" id="MF_00531">
    <property type="entry name" value="Ribosomal_uS19"/>
    <property type="match status" value="1"/>
</dbReference>
<dbReference type="InterPro" id="IPR002222">
    <property type="entry name" value="Ribosomal_uS19"/>
</dbReference>
<dbReference type="InterPro" id="IPR005732">
    <property type="entry name" value="Ribosomal_uS19_bac-type"/>
</dbReference>
<dbReference type="InterPro" id="IPR020934">
    <property type="entry name" value="Ribosomal_uS19_CS"/>
</dbReference>
<dbReference type="InterPro" id="IPR023575">
    <property type="entry name" value="Ribosomal_uS19_SF"/>
</dbReference>
<dbReference type="NCBIfam" id="TIGR01050">
    <property type="entry name" value="rpsS_bact"/>
    <property type="match status" value="1"/>
</dbReference>
<dbReference type="PANTHER" id="PTHR11880">
    <property type="entry name" value="RIBOSOMAL PROTEIN S19P FAMILY MEMBER"/>
    <property type="match status" value="1"/>
</dbReference>
<dbReference type="PANTHER" id="PTHR11880:SF8">
    <property type="entry name" value="SMALL RIBOSOMAL SUBUNIT PROTEIN US19M"/>
    <property type="match status" value="1"/>
</dbReference>
<dbReference type="Pfam" id="PF00203">
    <property type="entry name" value="Ribosomal_S19"/>
    <property type="match status" value="1"/>
</dbReference>
<dbReference type="PIRSF" id="PIRSF002144">
    <property type="entry name" value="Ribosomal_S19"/>
    <property type="match status" value="1"/>
</dbReference>
<dbReference type="PRINTS" id="PR00975">
    <property type="entry name" value="RIBOSOMALS19"/>
</dbReference>
<dbReference type="SUPFAM" id="SSF54570">
    <property type="entry name" value="Ribosomal protein S19"/>
    <property type="match status" value="1"/>
</dbReference>
<dbReference type="PROSITE" id="PS00323">
    <property type="entry name" value="RIBOSOMAL_S19"/>
    <property type="match status" value="1"/>
</dbReference>
<accession>B1IPY3</accession>
<sequence>MPRSLKKGPFIDLHLLKKVEKAVESGDKKPLRTWSRRSTIFPNMIGLTIAVHNGRQHVPVFVTDEMVGHKLGEFAPTRTYRGHAADKKAKKK</sequence>
<organism>
    <name type="scientific">Escherichia coli (strain ATCC 8739 / DSM 1576 / NBRC 3972 / NCIMB 8545 / WDCM 00012 / Crooks)</name>
    <dbReference type="NCBI Taxonomy" id="481805"/>
    <lineage>
        <taxon>Bacteria</taxon>
        <taxon>Pseudomonadati</taxon>
        <taxon>Pseudomonadota</taxon>
        <taxon>Gammaproteobacteria</taxon>
        <taxon>Enterobacterales</taxon>
        <taxon>Enterobacteriaceae</taxon>
        <taxon>Escherichia</taxon>
    </lineage>
</organism>
<evidence type="ECO:0000255" key="1">
    <source>
        <dbReference type="HAMAP-Rule" id="MF_00531"/>
    </source>
</evidence>
<evidence type="ECO:0000305" key="2"/>